<gene>
    <name evidence="1" type="primary">rimM</name>
    <name type="ordered locus">PputW619_4156</name>
</gene>
<feature type="chain" id="PRO_1000089513" description="Ribosome maturation factor RimM">
    <location>
        <begin position="1"/>
        <end position="178"/>
    </location>
</feature>
<feature type="domain" description="PRC barrel" evidence="1">
    <location>
        <begin position="100"/>
        <end position="178"/>
    </location>
</feature>
<proteinExistence type="inferred from homology"/>
<protein>
    <recommendedName>
        <fullName evidence="1">Ribosome maturation factor RimM</fullName>
    </recommendedName>
</protein>
<reference key="1">
    <citation type="submission" date="2008-02" db="EMBL/GenBank/DDBJ databases">
        <title>Complete sequence of Pseudomonas putida W619.</title>
        <authorList>
            <person name="Copeland A."/>
            <person name="Lucas S."/>
            <person name="Lapidus A."/>
            <person name="Barry K."/>
            <person name="Detter J.C."/>
            <person name="Glavina del Rio T."/>
            <person name="Dalin E."/>
            <person name="Tice H."/>
            <person name="Pitluck S."/>
            <person name="Chain P."/>
            <person name="Malfatti S."/>
            <person name="Shin M."/>
            <person name="Vergez L."/>
            <person name="Schmutz J."/>
            <person name="Larimer F."/>
            <person name="Land M."/>
            <person name="Hauser L."/>
            <person name="Kyrpides N."/>
            <person name="Kim E."/>
            <person name="Taghavi S."/>
            <person name="Vangronsveld D."/>
            <person name="van der Lelie D."/>
            <person name="Richardson P."/>
        </authorList>
    </citation>
    <scope>NUCLEOTIDE SEQUENCE [LARGE SCALE GENOMIC DNA]</scope>
    <source>
        <strain>W619</strain>
    </source>
</reference>
<name>RIMM_PSEPW</name>
<accession>B1JDE4</accession>
<keyword id="KW-0143">Chaperone</keyword>
<keyword id="KW-0963">Cytoplasm</keyword>
<keyword id="KW-0690">Ribosome biogenesis</keyword>
<keyword id="KW-0698">rRNA processing</keyword>
<comment type="function">
    <text evidence="1">An accessory protein needed during the final step in the assembly of 30S ribosomal subunit, possibly for assembly of the head region. Essential for efficient processing of 16S rRNA. May be needed both before and after RbfA during the maturation of 16S rRNA. It has affinity for free ribosomal 30S subunits but not for 70S ribosomes.</text>
</comment>
<comment type="subunit">
    <text evidence="1">Binds ribosomal protein uS19.</text>
</comment>
<comment type="subcellular location">
    <subcellularLocation>
        <location evidence="1">Cytoplasm</location>
    </subcellularLocation>
</comment>
<comment type="domain">
    <text evidence="1">The PRC barrel domain binds ribosomal protein uS19.</text>
</comment>
<comment type="similarity">
    <text evidence="1">Belongs to the RimM family.</text>
</comment>
<dbReference type="EMBL" id="CP000949">
    <property type="protein sequence ID" value="ACA74636.1"/>
    <property type="molecule type" value="Genomic_DNA"/>
</dbReference>
<dbReference type="SMR" id="B1JDE4"/>
<dbReference type="STRING" id="390235.PputW619_4156"/>
<dbReference type="KEGG" id="ppw:PputW619_4156"/>
<dbReference type="eggNOG" id="COG0806">
    <property type="taxonomic scope" value="Bacteria"/>
</dbReference>
<dbReference type="HOGENOM" id="CLU_077636_1_0_6"/>
<dbReference type="OrthoDB" id="9783509at2"/>
<dbReference type="GO" id="GO:0005737">
    <property type="term" value="C:cytoplasm"/>
    <property type="evidence" value="ECO:0007669"/>
    <property type="project" value="UniProtKB-SubCell"/>
</dbReference>
<dbReference type="GO" id="GO:0005840">
    <property type="term" value="C:ribosome"/>
    <property type="evidence" value="ECO:0007669"/>
    <property type="project" value="InterPro"/>
</dbReference>
<dbReference type="GO" id="GO:0043022">
    <property type="term" value="F:ribosome binding"/>
    <property type="evidence" value="ECO:0007669"/>
    <property type="project" value="InterPro"/>
</dbReference>
<dbReference type="GO" id="GO:0042274">
    <property type="term" value="P:ribosomal small subunit biogenesis"/>
    <property type="evidence" value="ECO:0007669"/>
    <property type="project" value="UniProtKB-UniRule"/>
</dbReference>
<dbReference type="GO" id="GO:0006364">
    <property type="term" value="P:rRNA processing"/>
    <property type="evidence" value="ECO:0007669"/>
    <property type="project" value="UniProtKB-UniRule"/>
</dbReference>
<dbReference type="Gene3D" id="2.30.30.240">
    <property type="entry name" value="PRC-barrel domain"/>
    <property type="match status" value="1"/>
</dbReference>
<dbReference type="Gene3D" id="2.40.30.60">
    <property type="entry name" value="RimM"/>
    <property type="match status" value="1"/>
</dbReference>
<dbReference type="HAMAP" id="MF_00014">
    <property type="entry name" value="Ribosome_mat_RimM"/>
    <property type="match status" value="1"/>
</dbReference>
<dbReference type="InterPro" id="IPR011033">
    <property type="entry name" value="PRC_barrel-like_sf"/>
</dbReference>
<dbReference type="InterPro" id="IPR056792">
    <property type="entry name" value="PRC_RimM"/>
</dbReference>
<dbReference type="InterPro" id="IPR011961">
    <property type="entry name" value="RimM"/>
</dbReference>
<dbReference type="InterPro" id="IPR002676">
    <property type="entry name" value="RimM_N"/>
</dbReference>
<dbReference type="InterPro" id="IPR036976">
    <property type="entry name" value="RimM_N_sf"/>
</dbReference>
<dbReference type="InterPro" id="IPR009000">
    <property type="entry name" value="Transl_B-barrel_sf"/>
</dbReference>
<dbReference type="NCBIfam" id="TIGR02273">
    <property type="entry name" value="16S_RimM"/>
    <property type="match status" value="1"/>
</dbReference>
<dbReference type="PANTHER" id="PTHR33692">
    <property type="entry name" value="RIBOSOME MATURATION FACTOR RIMM"/>
    <property type="match status" value="1"/>
</dbReference>
<dbReference type="PANTHER" id="PTHR33692:SF1">
    <property type="entry name" value="RIBOSOME MATURATION FACTOR RIMM"/>
    <property type="match status" value="1"/>
</dbReference>
<dbReference type="Pfam" id="PF24986">
    <property type="entry name" value="PRC_RimM"/>
    <property type="match status" value="1"/>
</dbReference>
<dbReference type="Pfam" id="PF01782">
    <property type="entry name" value="RimM"/>
    <property type="match status" value="1"/>
</dbReference>
<dbReference type="SUPFAM" id="SSF50346">
    <property type="entry name" value="PRC-barrel domain"/>
    <property type="match status" value="1"/>
</dbReference>
<dbReference type="SUPFAM" id="SSF50447">
    <property type="entry name" value="Translation proteins"/>
    <property type="match status" value="1"/>
</dbReference>
<organism>
    <name type="scientific">Pseudomonas putida (strain W619)</name>
    <dbReference type="NCBI Taxonomy" id="390235"/>
    <lineage>
        <taxon>Bacteria</taxon>
        <taxon>Pseudomonadati</taxon>
        <taxon>Pseudomonadota</taxon>
        <taxon>Gammaproteobacteria</taxon>
        <taxon>Pseudomonadales</taxon>
        <taxon>Pseudomonadaceae</taxon>
        <taxon>Pseudomonas</taxon>
    </lineage>
</organism>
<evidence type="ECO:0000255" key="1">
    <source>
        <dbReference type="HAMAP-Rule" id="MF_00014"/>
    </source>
</evidence>
<sequence>MNATPEKADDLIVVGKIFSVHGVRGEVKVYSFTDPIENLLDYPRWTLRHEGKVKQVELVSGRGSQKGLVVKLKGLDDRDEARLLSGFEICIPRSLLPNLAADEYYWYQLQGLKVINQDEQLFGKVDHLLETGANDVMVVKPCAGSLDDRERLLPYTAQCVLAIDLEAGVMRVEWDADF</sequence>